<accession>Q98BG9</accession>
<keyword id="KW-0067">ATP-binding</keyword>
<keyword id="KW-0963">Cytoplasm</keyword>
<keyword id="KW-0235">DNA replication</keyword>
<keyword id="KW-0238">DNA-binding</keyword>
<keyword id="KW-0446">Lipid-binding</keyword>
<keyword id="KW-0547">Nucleotide-binding</keyword>
<dbReference type="EMBL" id="BA000012">
    <property type="protein sequence ID" value="BAB52003.1"/>
    <property type="status" value="ALT_INIT"/>
    <property type="molecule type" value="Genomic_DNA"/>
</dbReference>
<dbReference type="SMR" id="Q98BG9"/>
<dbReference type="KEGG" id="mlo:mll5581"/>
<dbReference type="eggNOG" id="COG0593">
    <property type="taxonomic scope" value="Bacteria"/>
</dbReference>
<dbReference type="HOGENOM" id="CLU_026910_3_0_5"/>
<dbReference type="Proteomes" id="UP000000552">
    <property type="component" value="Chromosome"/>
</dbReference>
<dbReference type="GO" id="GO:0005737">
    <property type="term" value="C:cytoplasm"/>
    <property type="evidence" value="ECO:0007669"/>
    <property type="project" value="UniProtKB-SubCell"/>
</dbReference>
<dbReference type="GO" id="GO:0005886">
    <property type="term" value="C:plasma membrane"/>
    <property type="evidence" value="ECO:0007669"/>
    <property type="project" value="TreeGrafter"/>
</dbReference>
<dbReference type="GO" id="GO:0005524">
    <property type="term" value="F:ATP binding"/>
    <property type="evidence" value="ECO:0007669"/>
    <property type="project" value="UniProtKB-UniRule"/>
</dbReference>
<dbReference type="GO" id="GO:0016887">
    <property type="term" value="F:ATP hydrolysis activity"/>
    <property type="evidence" value="ECO:0007669"/>
    <property type="project" value="InterPro"/>
</dbReference>
<dbReference type="GO" id="GO:0003688">
    <property type="term" value="F:DNA replication origin binding"/>
    <property type="evidence" value="ECO:0007669"/>
    <property type="project" value="UniProtKB-UniRule"/>
</dbReference>
<dbReference type="GO" id="GO:0008289">
    <property type="term" value="F:lipid binding"/>
    <property type="evidence" value="ECO:0007669"/>
    <property type="project" value="UniProtKB-KW"/>
</dbReference>
<dbReference type="GO" id="GO:0006270">
    <property type="term" value="P:DNA replication initiation"/>
    <property type="evidence" value="ECO:0007669"/>
    <property type="project" value="UniProtKB-UniRule"/>
</dbReference>
<dbReference type="GO" id="GO:0006275">
    <property type="term" value="P:regulation of DNA replication"/>
    <property type="evidence" value="ECO:0007669"/>
    <property type="project" value="UniProtKB-UniRule"/>
</dbReference>
<dbReference type="CDD" id="cd00009">
    <property type="entry name" value="AAA"/>
    <property type="match status" value="1"/>
</dbReference>
<dbReference type="CDD" id="cd06571">
    <property type="entry name" value="Bac_DnaA_C"/>
    <property type="match status" value="1"/>
</dbReference>
<dbReference type="Gene3D" id="1.10.1750.10">
    <property type="match status" value="1"/>
</dbReference>
<dbReference type="Gene3D" id="1.10.8.60">
    <property type="match status" value="1"/>
</dbReference>
<dbReference type="Gene3D" id="3.30.300.180">
    <property type="match status" value="1"/>
</dbReference>
<dbReference type="Gene3D" id="3.40.50.300">
    <property type="entry name" value="P-loop containing nucleotide triphosphate hydrolases"/>
    <property type="match status" value="1"/>
</dbReference>
<dbReference type="HAMAP" id="MF_00377">
    <property type="entry name" value="DnaA_bact"/>
    <property type="match status" value="1"/>
</dbReference>
<dbReference type="InterPro" id="IPR003593">
    <property type="entry name" value="AAA+_ATPase"/>
</dbReference>
<dbReference type="InterPro" id="IPR001957">
    <property type="entry name" value="Chromosome_initiator_DnaA"/>
</dbReference>
<dbReference type="InterPro" id="IPR020591">
    <property type="entry name" value="Chromosome_initiator_DnaA-like"/>
</dbReference>
<dbReference type="InterPro" id="IPR018312">
    <property type="entry name" value="Chromosome_initiator_DnaA_CS"/>
</dbReference>
<dbReference type="InterPro" id="IPR013159">
    <property type="entry name" value="DnaA_C"/>
</dbReference>
<dbReference type="InterPro" id="IPR013317">
    <property type="entry name" value="DnaA_dom"/>
</dbReference>
<dbReference type="InterPro" id="IPR024633">
    <property type="entry name" value="DnaA_N_dom"/>
</dbReference>
<dbReference type="InterPro" id="IPR038454">
    <property type="entry name" value="DnaA_N_sf"/>
</dbReference>
<dbReference type="InterPro" id="IPR027417">
    <property type="entry name" value="P-loop_NTPase"/>
</dbReference>
<dbReference type="InterPro" id="IPR010921">
    <property type="entry name" value="Trp_repressor/repl_initiator"/>
</dbReference>
<dbReference type="NCBIfam" id="TIGR00362">
    <property type="entry name" value="DnaA"/>
    <property type="match status" value="1"/>
</dbReference>
<dbReference type="PANTHER" id="PTHR30050">
    <property type="entry name" value="CHROMOSOMAL REPLICATION INITIATOR PROTEIN DNAA"/>
    <property type="match status" value="1"/>
</dbReference>
<dbReference type="PANTHER" id="PTHR30050:SF2">
    <property type="entry name" value="CHROMOSOMAL REPLICATION INITIATOR PROTEIN DNAA"/>
    <property type="match status" value="1"/>
</dbReference>
<dbReference type="Pfam" id="PF00308">
    <property type="entry name" value="Bac_DnaA"/>
    <property type="match status" value="1"/>
</dbReference>
<dbReference type="Pfam" id="PF08299">
    <property type="entry name" value="Bac_DnaA_C"/>
    <property type="match status" value="1"/>
</dbReference>
<dbReference type="Pfam" id="PF11638">
    <property type="entry name" value="DnaA_N"/>
    <property type="match status" value="1"/>
</dbReference>
<dbReference type="PRINTS" id="PR00051">
    <property type="entry name" value="DNAA"/>
</dbReference>
<dbReference type="SMART" id="SM00382">
    <property type="entry name" value="AAA"/>
    <property type="match status" value="1"/>
</dbReference>
<dbReference type="SMART" id="SM00760">
    <property type="entry name" value="Bac_DnaA_C"/>
    <property type="match status" value="1"/>
</dbReference>
<dbReference type="SUPFAM" id="SSF52540">
    <property type="entry name" value="P-loop containing nucleoside triphosphate hydrolases"/>
    <property type="match status" value="1"/>
</dbReference>
<dbReference type="SUPFAM" id="SSF48295">
    <property type="entry name" value="TrpR-like"/>
    <property type="match status" value="1"/>
</dbReference>
<dbReference type="PROSITE" id="PS01008">
    <property type="entry name" value="DNAA"/>
    <property type="match status" value="1"/>
</dbReference>
<proteinExistence type="inferred from homology"/>
<reference key="1">
    <citation type="journal article" date="2000" name="DNA Res.">
        <title>Complete genome structure of the nitrogen-fixing symbiotic bacterium Mesorhizobium loti.</title>
        <authorList>
            <person name="Kaneko T."/>
            <person name="Nakamura Y."/>
            <person name="Sato S."/>
            <person name="Asamizu E."/>
            <person name="Kato T."/>
            <person name="Sasamoto S."/>
            <person name="Watanabe A."/>
            <person name="Idesawa K."/>
            <person name="Ishikawa A."/>
            <person name="Kawashima K."/>
            <person name="Kimura T."/>
            <person name="Kishida Y."/>
            <person name="Kiyokawa C."/>
            <person name="Kohara M."/>
            <person name="Matsumoto M."/>
            <person name="Matsuno A."/>
            <person name="Mochizuki Y."/>
            <person name="Nakayama S."/>
            <person name="Nakazaki N."/>
            <person name="Shimpo S."/>
            <person name="Sugimoto M."/>
            <person name="Takeuchi C."/>
            <person name="Yamada M."/>
            <person name="Tabata S."/>
        </authorList>
    </citation>
    <scope>NUCLEOTIDE SEQUENCE [LARGE SCALE GENOMIC DNA]</scope>
    <source>
        <strain>LMG 29417 / CECT 9101 / MAFF 303099</strain>
    </source>
</reference>
<evidence type="ECO:0000255" key="1">
    <source>
        <dbReference type="HAMAP-Rule" id="MF_00377"/>
    </source>
</evidence>
<evidence type="ECO:0000305" key="2"/>
<gene>
    <name evidence="1" type="primary">dnaA</name>
    <name type="ordered locus">mll5581</name>
</gene>
<comment type="function">
    <text evidence="1">Plays an essential role in the initiation and regulation of chromosomal replication. ATP-DnaA binds to the origin of replication (oriC) to initiate formation of the DNA replication initiation complex once per cell cycle. Binds the DnaA box (a 9 base pair repeat at the origin) and separates the double-stranded (ds)DNA. Forms a right-handed helical filament on oriC DNA; dsDNA binds to the exterior of the filament while single-stranded (ss)DNA is stabiized in the filament's interior. The ATP-DnaA-oriC complex binds and stabilizes one strand of the AT-rich DNA unwinding element (DUE), permitting loading of DNA polymerase. After initiation quickly degrades to an ADP-DnaA complex that is not apt for DNA replication. Binds acidic phospholipids.</text>
</comment>
<comment type="subunit">
    <text evidence="1">Oligomerizes as a right-handed, spiral filament on DNA at oriC.</text>
</comment>
<comment type="subcellular location">
    <subcellularLocation>
        <location evidence="1">Cytoplasm</location>
    </subcellularLocation>
</comment>
<comment type="domain">
    <text evidence="1">Domain I is involved in oligomerization and binding regulators, domain II is flexibile and of varying length in different bacteria, domain III forms the AAA+ region, while domain IV binds dsDNA.</text>
</comment>
<comment type="similarity">
    <text evidence="1">Belongs to the DnaA family.</text>
</comment>
<comment type="sequence caution" evidence="2">
    <conflict type="erroneous initiation">
        <sequence resource="EMBL-CDS" id="BAB52003"/>
    </conflict>
</comment>
<sequence>MAVSSDAEQKFDRVKTQLKARLGAEVYSSWFGRMKVAEASKGIVRISVPTAFLRSWINGHYLDLISELWKQEDADLLKIEIVVRTATRQGRSHAEPELAPARKMTRQTQTALAAGTVSPGRVERPPVPRPGAAVESEFRHNVLGSPLDPRYTFGSFIEGPSNRVAFAAAKAVAESQSSAVRFNPLFLHATVGLGKTHLLQAIAAESLKQNPKSRVVYLTAEYFMWRFATAIRDNNALTLKEQLRDIDLLIIDDMQFLQGKSIQHEFCHLINMLLDSAKQVVVAADRPPSELESLEPRVRSRLNGGVALEMSAPDFAMRLGMLKLRLATARIDDASLDISDEILNHVARTVTGSGRELEGAFNQLLFRQSFEPQITIDRIDEILGHIYRTGEPKRVRIEDIQRIVARHYNVSKTELLSNRRTRTIVKPRQVAMYLSKVMTPRSLPEIGRRFGGRDHTTVLHAVRKIEDLSGNDNTLAQELELLRRLINDQA</sequence>
<organism>
    <name type="scientific">Mesorhizobium japonicum (strain LMG 29417 / CECT 9101 / MAFF 303099)</name>
    <name type="common">Mesorhizobium loti (strain MAFF 303099)</name>
    <dbReference type="NCBI Taxonomy" id="266835"/>
    <lineage>
        <taxon>Bacteria</taxon>
        <taxon>Pseudomonadati</taxon>
        <taxon>Pseudomonadota</taxon>
        <taxon>Alphaproteobacteria</taxon>
        <taxon>Hyphomicrobiales</taxon>
        <taxon>Phyllobacteriaceae</taxon>
        <taxon>Mesorhizobium</taxon>
    </lineage>
</organism>
<feature type="chain" id="PRO_0000114243" description="Chromosomal replication initiator protein DnaA">
    <location>
        <begin position="1"/>
        <end position="490"/>
    </location>
</feature>
<feature type="region of interest" description="Domain I, interacts with DnaA modulators" evidence="1">
    <location>
        <begin position="1"/>
        <end position="75"/>
    </location>
</feature>
<feature type="region of interest" description="Domain II" evidence="1">
    <location>
        <begin position="75"/>
        <end position="145"/>
    </location>
</feature>
<feature type="region of interest" description="Domain III, AAA+ region" evidence="1">
    <location>
        <begin position="146"/>
        <end position="368"/>
    </location>
</feature>
<feature type="region of interest" description="Domain IV, binds dsDNA" evidence="1">
    <location>
        <begin position="369"/>
        <end position="490"/>
    </location>
</feature>
<feature type="binding site" evidence="1">
    <location>
        <position position="192"/>
    </location>
    <ligand>
        <name>ATP</name>
        <dbReference type="ChEBI" id="CHEBI:30616"/>
    </ligand>
</feature>
<feature type="binding site" evidence="1">
    <location>
        <position position="194"/>
    </location>
    <ligand>
        <name>ATP</name>
        <dbReference type="ChEBI" id="CHEBI:30616"/>
    </ligand>
</feature>
<feature type="binding site" evidence="1">
    <location>
        <position position="195"/>
    </location>
    <ligand>
        <name>ATP</name>
        <dbReference type="ChEBI" id="CHEBI:30616"/>
    </ligand>
</feature>
<feature type="binding site" evidence="1">
    <location>
        <position position="196"/>
    </location>
    <ligand>
        <name>ATP</name>
        <dbReference type="ChEBI" id="CHEBI:30616"/>
    </ligand>
</feature>
<protein>
    <recommendedName>
        <fullName evidence="1">Chromosomal replication initiator protein DnaA</fullName>
    </recommendedName>
</protein>
<name>DNAA_RHILO</name>